<gene>
    <name evidence="1" type="primary">msrB</name>
    <name type="ordered locus">Bpro_2582</name>
</gene>
<evidence type="ECO:0000255" key="1">
    <source>
        <dbReference type="HAMAP-Rule" id="MF_01400"/>
    </source>
</evidence>
<evidence type="ECO:0000255" key="2">
    <source>
        <dbReference type="PROSITE-ProRule" id="PRU01126"/>
    </source>
</evidence>
<protein>
    <recommendedName>
        <fullName evidence="1">Peptide methionine sulfoxide reductase MsrB</fullName>
        <ecNumber evidence="1">1.8.4.12</ecNumber>
    </recommendedName>
    <alternativeName>
        <fullName evidence="1">Peptide-methionine (R)-S-oxide reductase</fullName>
    </alternativeName>
</protein>
<comment type="catalytic activity">
    <reaction evidence="1">
        <text>L-methionyl-[protein] + [thioredoxin]-disulfide + H2O = L-methionyl-(R)-S-oxide-[protein] + [thioredoxin]-dithiol</text>
        <dbReference type="Rhea" id="RHEA:24164"/>
        <dbReference type="Rhea" id="RHEA-COMP:10698"/>
        <dbReference type="Rhea" id="RHEA-COMP:10700"/>
        <dbReference type="Rhea" id="RHEA-COMP:12313"/>
        <dbReference type="Rhea" id="RHEA-COMP:12314"/>
        <dbReference type="ChEBI" id="CHEBI:15377"/>
        <dbReference type="ChEBI" id="CHEBI:16044"/>
        <dbReference type="ChEBI" id="CHEBI:29950"/>
        <dbReference type="ChEBI" id="CHEBI:45764"/>
        <dbReference type="ChEBI" id="CHEBI:50058"/>
        <dbReference type="EC" id="1.8.4.12"/>
    </reaction>
</comment>
<comment type="cofactor">
    <cofactor evidence="1">
        <name>Zn(2+)</name>
        <dbReference type="ChEBI" id="CHEBI:29105"/>
    </cofactor>
    <text evidence="1">Binds 1 zinc ion per subunit. The zinc ion is important for the structural integrity of the protein.</text>
</comment>
<comment type="similarity">
    <text evidence="1">Belongs to the MsrB Met sulfoxide reductase family.</text>
</comment>
<name>MSRB_POLSJ</name>
<keyword id="KW-0479">Metal-binding</keyword>
<keyword id="KW-0560">Oxidoreductase</keyword>
<keyword id="KW-1185">Reference proteome</keyword>
<keyword id="KW-0862">Zinc</keyword>
<accession>Q12AE4</accession>
<reference key="1">
    <citation type="journal article" date="2008" name="Appl. Environ. Microbiol.">
        <title>The genome of Polaromonas sp. strain JS666: insights into the evolution of a hydrocarbon- and xenobiotic-degrading bacterium, and features of relevance to biotechnology.</title>
        <authorList>
            <person name="Mattes T.E."/>
            <person name="Alexander A.K."/>
            <person name="Richardson P.M."/>
            <person name="Munk A.C."/>
            <person name="Han C.S."/>
            <person name="Stothard P."/>
            <person name="Coleman N.V."/>
        </authorList>
    </citation>
    <scope>NUCLEOTIDE SEQUENCE [LARGE SCALE GENOMIC DNA]</scope>
    <source>
        <strain>JS666 / ATCC BAA-500</strain>
    </source>
</reference>
<organism>
    <name type="scientific">Polaromonas sp. (strain JS666 / ATCC BAA-500)</name>
    <dbReference type="NCBI Taxonomy" id="296591"/>
    <lineage>
        <taxon>Bacteria</taxon>
        <taxon>Pseudomonadati</taxon>
        <taxon>Pseudomonadota</taxon>
        <taxon>Betaproteobacteria</taxon>
        <taxon>Burkholderiales</taxon>
        <taxon>Comamonadaceae</taxon>
        <taxon>Polaromonas</taxon>
    </lineage>
</organism>
<proteinExistence type="inferred from homology"/>
<sequence>MSTKIQKTDAEWKALLAEKGAEPVAFEVTRHAATERPFTGKYEDNYAQGTYRCICCDAELFDSSSKFDAGCGWPSFSQELNKGAIEEHVDRAHGMTRTETVCANCGAHLGHVFPDGPTPTGLRYCMNSASLDFKPK</sequence>
<feature type="chain" id="PRO_1000145376" description="Peptide methionine sulfoxide reductase MsrB">
    <location>
        <begin position="1"/>
        <end position="136"/>
    </location>
</feature>
<feature type="domain" description="MsrB" evidence="2">
    <location>
        <begin position="9"/>
        <end position="136"/>
    </location>
</feature>
<feature type="active site" description="Nucleophile" evidence="2">
    <location>
        <position position="125"/>
    </location>
</feature>
<feature type="binding site" evidence="2">
    <location>
        <position position="53"/>
    </location>
    <ligand>
        <name>Zn(2+)</name>
        <dbReference type="ChEBI" id="CHEBI:29105"/>
    </ligand>
</feature>
<feature type="binding site" evidence="2">
    <location>
        <position position="56"/>
    </location>
    <ligand>
        <name>Zn(2+)</name>
        <dbReference type="ChEBI" id="CHEBI:29105"/>
    </ligand>
</feature>
<feature type="binding site" evidence="2">
    <location>
        <position position="102"/>
    </location>
    <ligand>
        <name>Zn(2+)</name>
        <dbReference type="ChEBI" id="CHEBI:29105"/>
    </ligand>
</feature>
<feature type="binding site" evidence="2">
    <location>
        <position position="105"/>
    </location>
    <ligand>
        <name>Zn(2+)</name>
        <dbReference type="ChEBI" id="CHEBI:29105"/>
    </ligand>
</feature>
<dbReference type="EC" id="1.8.4.12" evidence="1"/>
<dbReference type="EMBL" id="CP000316">
    <property type="protein sequence ID" value="ABE44498.1"/>
    <property type="molecule type" value="Genomic_DNA"/>
</dbReference>
<dbReference type="RefSeq" id="WP_011483496.1">
    <property type="nucleotide sequence ID" value="NC_007948.1"/>
</dbReference>
<dbReference type="SMR" id="Q12AE4"/>
<dbReference type="STRING" id="296591.Bpro_2582"/>
<dbReference type="KEGG" id="pol:Bpro_2582"/>
<dbReference type="eggNOG" id="COG0229">
    <property type="taxonomic scope" value="Bacteria"/>
</dbReference>
<dbReference type="HOGENOM" id="CLU_031040_8_5_4"/>
<dbReference type="OrthoDB" id="9785497at2"/>
<dbReference type="Proteomes" id="UP000001983">
    <property type="component" value="Chromosome"/>
</dbReference>
<dbReference type="GO" id="GO:0005737">
    <property type="term" value="C:cytoplasm"/>
    <property type="evidence" value="ECO:0007669"/>
    <property type="project" value="TreeGrafter"/>
</dbReference>
<dbReference type="GO" id="GO:0033743">
    <property type="term" value="F:peptide-methionine (R)-S-oxide reductase activity"/>
    <property type="evidence" value="ECO:0007669"/>
    <property type="project" value="UniProtKB-UniRule"/>
</dbReference>
<dbReference type="GO" id="GO:0008270">
    <property type="term" value="F:zinc ion binding"/>
    <property type="evidence" value="ECO:0007669"/>
    <property type="project" value="UniProtKB-UniRule"/>
</dbReference>
<dbReference type="GO" id="GO:0030091">
    <property type="term" value="P:protein repair"/>
    <property type="evidence" value="ECO:0007669"/>
    <property type="project" value="InterPro"/>
</dbReference>
<dbReference type="GO" id="GO:0006979">
    <property type="term" value="P:response to oxidative stress"/>
    <property type="evidence" value="ECO:0007669"/>
    <property type="project" value="InterPro"/>
</dbReference>
<dbReference type="FunFam" id="2.170.150.20:FF:000001">
    <property type="entry name" value="Peptide methionine sulfoxide reductase MsrB"/>
    <property type="match status" value="1"/>
</dbReference>
<dbReference type="Gene3D" id="2.170.150.20">
    <property type="entry name" value="Peptide methionine sulfoxide reductase"/>
    <property type="match status" value="1"/>
</dbReference>
<dbReference type="HAMAP" id="MF_01400">
    <property type="entry name" value="MsrB"/>
    <property type="match status" value="1"/>
</dbReference>
<dbReference type="InterPro" id="IPR028427">
    <property type="entry name" value="Met_Sox_Rdtase_MsrB"/>
</dbReference>
<dbReference type="InterPro" id="IPR002579">
    <property type="entry name" value="Met_Sox_Rdtase_MsrB_dom"/>
</dbReference>
<dbReference type="InterPro" id="IPR011057">
    <property type="entry name" value="Mss4-like_sf"/>
</dbReference>
<dbReference type="NCBIfam" id="TIGR00357">
    <property type="entry name" value="peptide-methionine (R)-S-oxide reductase MsrB"/>
    <property type="match status" value="1"/>
</dbReference>
<dbReference type="PANTHER" id="PTHR10173">
    <property type="entry name" value="METHIONINE SULFOXIDE REDUCTASE"/>
    <property type="match status" value="1"/>
</dbReference>
<dbReference type="PANTHER" id="PTHR10173:SF52">
    <property type="entry name" value="METHIONINE-R-SULFOXIDE REDUCTASE B1"/>
    <property type="match status" value="1"/>
</dbReference>
<dbReference type="Pfam" id="PF01641">
    <property type="entry name" value="SelR"/>
    <property type="match status" value="1"/>
</dbReference>
<dbReference type="SUPFAM" id="SSF51316">
    <property type="entry name" value="Mss4-like"/>
    <property type="match status" value="1"/>
</dbReference>
<dbReference type="PROSITE" id="PS51790">
    <property type="entry name" value="MSRB"/>
    <property type="match status" value="1"/>
</dbReference>